<feature type="chain" id="PRO_1000193421" description="DNA repair protein RecO">
    <location>
        <begin position="1"/>
        <end position="237"/>
    </location>
</feature>
<sequence>MNIKDVGVIIAKKPLKENTFIITVFTKNHGLYSGVVKESSKKSKFIYQEGNIVDFLWQARLHEHIGMAKCELIKSYTGYFIINKAKLYAFNSVISLIKELFHEREEHSNFFSFLINYLDNLSKNFCFRDYINFELALLAETGYKLDLTKCGVTHVTTDLNYVSPKSARALSYEVGKPYKDKLLILPKFLLSDDSEITLEEKRQASTLTNYFFNRYLFHNNRQAEARQIFMEYILNNS</sequence>
<comment type="function">
    <text evidence="1">Involved in DNA repair and RecF pathway recombination.</text>
</comment>
<comment type="similarity">
    <text evidence="1">Belongs to the RecO family.</text>
</comment>
<dbReference type="EMBL" id="CP000053">
    <property type="protein sequence ID" value="AAY61719.1"/>
    <property type="molecule type" value="Genomic_DNA"/>
</dbReference>
<dbReference type="SMR" id="Q4UL54"/>
<dbReference type="STRING" id="315456.RF_0868"/>
<dbReference type="KEGG" id="rfe:RF_0868"/>
<dbReference type="eggNOG" id="COG1381">
    <property type="taxonomic scope" value="Bacteria"/>
</dbReference>
<dbReference type="HOGENOM" id="CLU_086029_0_0_5"/>
<dbReference type="OrthoDB" id="9804792at2"/>
<dbReference type="Proteomes" id="UP000008548">
    <property type="component" value="Chromosome"/>
</dbReference>
<dbReference type="GO" id="GO:0043590">
    <property type="term" value="C:bacterial nucleoid"/>
    <property type="evidence" value="ECO:0007669"/>
    <property type="project" value="TreeGrafter"/>
</dbReference>
<dbReference type="GO" id="GO:0006310">
    <property type="term" value="P:DNA recombination"/>
    <property type="evidence" value="ECO:0007669"/>
    <property type="project" value="UniProtKB-UniRule"/>
</dbReference>
<dbReference type="GO" id="GO:0006302">
    <property type="term" value="P:double-strand break repair"/>
    <property type="evidence" value="ECO:0007669"/>
    <property type="project" value="TreeGrafter"/>
</dbReference>
<dbReference type="Gene3D" id="2.40.50.140">
    <property type="entry name" value="Nucleic acid-binding proteins"/>
    <property type="match status" value="1"/>
</dbReference>
<dbReference type="Gene3D" id="1.20.1440.120">
    <property type="entry name" value="Recombination protein O, C-terminal domain"/>
    <property type="match status" value="1"/>
</dbReference>
<dbReference type="HAMAP" id="MF_00201">
    <property type="entry name" value="RecO"/>
    <property type="match status" value="1"/>
</dbReference>
<dbReference type="InterPro" id="IPR037278">
    <property type="entry name" value="ARFGAP/RecO"/>
</dbReference>
<dbReference type="InterPro" id="IPR022572">
    <property type="entry name" value="DNA_rep/recomb_RecO_N"/>
</dbReference>
<dbReference type="InterPro" id="IPR012340">
    <property type="entry name" value="NA-bd_OB-fold"/>
</dbReference>
<dbReference type="InterPro" id="IPR003717">
    <property type="entry name" value="RecO"/>
</dbReference>
<dbReference type="InterPro" id="IPR042242">
    <property type="entry name" value="RecO_C"/>
</dbReference>
<dbReference type="NCBIfam" id="TIGR00613">
    <property type="entry name" value="reco"/>
    <property type="match status" value="1"/>
</dbReference>
<dbReference type="PANTHER" id="PTHR33991">
    <property type="entry name" value="DNA REPAIR PROTEIN RECO"/>
    <property type="match status" value="1"/>
</dbReference>
<dbReference type="PANTHER" id="PTHR33991:SF1">
    <property type="entry name" value="DNA REPAIR PROTEIN RECO"/>
    <property type="match status" value="1"/>
</dbReference>
<dbReference type="Pfam" id="PF02565">
    <property type="entry name" value="RecO_C"/>
    <property type="match status" value="1"/>
</dbReference>
<dbReference type="Pfam" id="PF11967">
    <property type="entry name" value="RecO_N"/>
    <property type="match status" value="1"/>
</dbReference>
<dbReference type="SUPFAM" id="SSF57863">
    <property type="entry name" value="ArfGap/RecO-like zinc finger"/>
    <property type="match status" value="1"/>
</dbReference>
<dbReference type="SUPFAM" id="SSF50249">
    <property type="entry name" value="Nucleic acid-binding proteins"/>
    <property type="match status" value="1"/>
</dbReference>
<reference key="1">
    <citation type="journal article" date="2005" name="PLoS Biol.">
        <title>The genome sequence of Rickettsia felis identifies the first putative conjugative plasmid in an obligate intracellular parasite.</title>
        <authorList>
            <person name="Ogata H."/>
            <person name="Renesto P."/>
            <person name="Audic S."/>
            <person name="Robert C."/>
            <person name="Blanc G."/>
            <person name="Fournier P.-E."/>
            <person name="Parinello H."/>
            <person name="Claverie J.-M."/>
            <person name="Raoult D."/>
        </authorList>
    </citation>
    <scope>NUCLEOTIDE SEQUENCE [LARGE SCALE GENOMIC DNA]</scope>
    <source>
        <strain>ATCC VR-1525 / URRWXCal2</strain>
    </source>
</reference>
<accession>Q4UL54</accession>
<evidence type="ECO:0000255" key="1">
    <source>
        <dbReference type="HAMAP-Rule" id="MF_00201"/>
    </source>
</evidence>
<organism>
    <name type="scientific">Rickettsia felis (strain ATCC VR-1525 / URRWXCal2)</name>
    <name type="common">Rickettsia azadi</name>
    <dbReference type="NCBI Taxonomy" id="315456"/>
    <lineage>
        <taxon>Bacteria</taxon>
        <taxon>Pseudomonadati</taxon>
        <taxon>Pseudomonadota</taxon>
        <taxon>Alphaproteobacteria</taxon>
        <taxon>Rickettsiales</taxon>
        <taxon>Rickettsiaceae</taxon>
        <taxon>Rickettsieae</taxon>
        <taxon>Rickettsia</taxon>
        <taxon>spotted fever group</taxon>
    </lineage>
</organism>
<proteinExistence type="inferred from homology"/>
<protein>
    <recommendedName>
        <fullName evidence="1">DNA repair protein RecO</fullName>
    </recommendedName>
    <alternativeName>
        <fullName evidence="1">Recombination protein O</fullName>
    </alternativeName>
</protein>
<keyword id="KW-0227">DNA damage</keyword>
<keyword id="KW-0233">DNA recombination</keyword>
<keyword id="KW-0234">DNA repair</keyword>
<name>RECO_RICFE</name>
<gene>
    <name evidence="1" type="primary">recO</name>
    <name type="ordered locus">RF_0868</name>
</gene>